<proteinExistence type="inferred from homology"/>
<gene>
    <name evidence="1" type="primary">glyA2</name>
    <name type="ordered locus">Bcep18194_B2754</name>
</gene>
<name>GLYA2_BURL3</name>
<comment type="function">
    <text evidence="1">Catalyzes the reversible interconversion of serine and glycine with tetrahydrofolate (THF) serving as the one-carbon carrier. This reaction serves as the major source of one-carbon groups required for the biosynthesis of purines, thymidylate, methionine, and other important biomolecules. Also exhibits THF-independent aldolase activity toward beta-hydroxyamino acids, producing glycine and aldehydes, via a retro-aldol mechanism.</text>
</comment>
<comment type="catalytic activity">
    <reaction evidence="1">
        <text>(6R)-5,10-methylene-5,6,7,8-tetrahydrofolate + glycine + H2O = (6S)-5,6,7,8-tetrahydrofolate + L-serine</text>
        <dbReference type="Rhea" id="RHEA:15481"/>
        <dbReference type="ChEBI" id="CHEBI:15377"/>
        <dbReference type="ChEBI" id="CHEBI:15636"/>
        <dbReference type="ChEBI" id="CHEBI:33384"/>
        <dbReference type="ChEBI" id="CHEBI:57305"/>
        <dbReference type="ChEBI" id="CHEBI:57453"/>
        <dbReference type="EC" id="2.1.2.1"/>
    </reaction>
</comment>
<comment type="cofactor">
    <cofactor evidence="1">
        <name>pyridoxal 5'-phosphate</name>
        <dbReference type="ChEBI" id="CHEBI:597326"/>
    </cofactor>
</comment>
<comment type="pathway">
    <text evidence="1">One-carbon metabolism; tetrahydrofolate interconversion.</text>
</comment>
<comment type="pathway">
    <text evidence="1">Amino-acid biosynthesis; glycine biosynthesis; glycine from L-serine: step 1/1.</text>
</comment>
<comment type="subunit">
    <text evidence="1">Homodimer.</text>
</comment>
<comment type="subcellular location">
    <subcellularLocation>
        <location evidence="1">Cytoplasm</location>
    </subcellularLocation>
</comment>
<comment type="similarity">
    <text evidence="1">Belongs to the SHMT family.</text>
</comment>
<comment type="sequence caution" evidence="2">
    <conflict type="erroneous initiation">
        <sequence resource="EMBL-CDS" id="ABB12865"/>
    </conflict>
</comment>
<accession>Q391K1</accession>
<reference key="1">
    <citation type="submission" date="2005-10" db="EMBL/GenBank/DDBJ databases">
        <title>Complete sequence of chromosome 2 of Burkholderia sp. 383.</title>
        <authorList>
            <consortium name="US DOE Joint Genome Institute"/>
            <person name="Copeland A."/>
            <person name="Lucas S."/>
            <person name="Lapidus A."/>
            <person name="Barry K."/>
            <person name="Detter J.C."/>
            <person name="Glavina T."/>
            <person name="Hammon N."/>
            <person name="Israni S."/>
            <person name="Pitluck S."/>
            <person name="Chain P."/>
            <person name="Malfatti S."/>
            <person name="Shin M."/>
            <person name="Vergez L."/>
            <person name="Schmutz J."/>
            <person name="Larimer F."/>
            <person name="Land M."/>
            <person name="Kyrpides N."/>
            <person name="Lykidis A."/>
            <person name="Richardson P."/>
        </authorList>
    </citation>
    <scope>NUCLEOTIDE SEQUENCE [LARGE SCALE GENOMIC DNA]</scope>
    <source>
        <strain>ATCC 17760 / DSM 23089 / LMG 22485 / NCIMB 9086 / R18194 / 383</strain>
    </source>
</reference>
<keyword id="KW-0028">Amino-acid biosynthesis</keyword>
<keyword id="KW-0963">Cytoplasm</keyword>
<keyword id="KW-0554">One-carbon metabolism</keyword>
<keyword id="KW-0663">Pyridoxal phosphate</keyword>
<keyword id="KW-0808">Transferase</keyword>
<evidence type="ECO:0000255" key="1">
    <source>
        <dbReference type="HAMAP-Rule" id="MF_00051"/>
    </source>
</evidence>
<evidence type="ECO:0000305" key="2"/>
<organism>
    <name type="scientific">Burkholderia lata (strain ATCC 17760 / DSM 23089 / LMG 22485 / NCIMB 9086 / R18194 / 383)</name>
    <dbReference type="NCBI Taxonomy" id="482957"/>
    <lineage>
        <taxon>Bacteria</taxon>
        <taxon>Pseudomonadati</taxon>
        <taxon>Pseudomonadota</taxon>
        <taxon>Betaproteobacteria</taxon>
        <taxon>Burkholderiales</taxon>
        <taxon>Burkholderiaceae</taxon>
        <taxon>Burkholderia</taxon>
        <taxon>Burkholderia cepacia complex</taxon>
    </lineage>
</organism>
<dbReference type="EC" id="2.1.2.1" evidence="1"/>
<dbReference type="EMBL" id="CP000152">
    <property type="protein sequence ID" value="ABB12865.1"/>
    <property type="status" value="ALT_INIT"/>
    <property type="molecule type" value="Genomic_DNA"/>
</dbReference>
<dbReference type="RefSeq" id="WP_011356345.1">
    <property type="nucleotide sequence ID" value="NC_007511.1"/>
</dbReference>
<dbReference type="SMR" id="Q391K1"/>
<dbReference type="GeneID" id="45099060"/>
<dbReference type="KEGG" id="bur:Bcep18194_B2754"/>
<dbReference type="PATRIC" id="fig|482957.22.peg.6562"/>
<dbReference type="HOGENOM" id="CLU_022477_2_1_4"/>
<dbReference type="UniPathway" id="UPA00193"/>
<dbReference type="UniPathway" id="UPA00288">
    <property type="reaction ID" value="UER01023"/>
</dbReference>
<dbReference type="Proteomes" id="UP000002705">
    <property type="component" value="Chromosome 2"/>
</dbReference>
<dbReference type="GO" id="GO:0005829">
    <property type="term" value="C:cytosol"/>
    <property type="evidence" value="ECO:0007669"/>
    <property type="project" value="TreeGrafter"/>
</dbReference>
<dbReference type="GO" id="GO:0004372">
    <property type="term" value="F:glycine hydroxymethyltransferase activity"/>
    <property type="evidence" value="ECO:0007669"/>
    <property type="project" value="UniProtKB-UniRule"/>
</dbReference>
<dbReference type="GO" id="GO:0030170">
    <property type="term" value="F:pyridoxal phosphate binding"/>
    <property type="evidence" value="ECO:0007669"/>
    <property type="project" value="UniProtKB-UniRule"/>
</dbReference>
<dbReference type="GO" id="GO:0019264">
    <property type="term" value="P:glycine biosynthetic process from serine"/>
    <property type="evidence" value="ECO:0007669"/>
    <property type="project" value="UniProtKB-UniRule"/>
</dbReference>
<dbReference type="GO" id="GO:0035999">
    <property type="term" value="P:tetrahydrofolate interconversion"/>
    <property type="evidence" value="ECO:0007669"/>
    <property type="project" value="UniProtKB-UniRule"/>
</dbReference>
<dbReference type="CDD" id="cd00378">
    <property type="entry name" value="SHMT"/>
    <property type="match status" value="1"/>
</dbReference>
<dbReference type="FunFam" id="3.40.640.10:FF:000001">
    <property type="entry name" value="Serine hydroxymethyltransferase"/>
    <property type="match status" value="1"/>
</dbReference>
<dbReference type="FunFam" id="3.90.1150.10:FF:000003">
    <property type="entry name" value="Serine hydroxymethyltransferase"/>
    <property type="match status" value="1"/>
</dbReference>
<dbReference type="Gene3D" id="3.90.1150.10">
    <property type="entry name" value="Aspartate Aminotransferase, domain 1"/>
    <property type="match status" value="1"/>
</dbReference>
<dbReference type="Gene3D" id="3.40.640.10">
    <property type="entry name" value="Type I PLP-dependent aspartate aminotransferase-like (Major domain)"/>
    <property type="match status" value="1"/>
</dbReference>
<dbReference type="HAMAP" id="MF_00051">
    <property type="entry name" value="SHMT"/>
    <property type="match status" value="1"/>
</dbReference>
<dbReference type="InterPro" id="IPR015424">
    <property type="entry name" value="PyrdxlP-dep_Trfase"/>
</dbReference>
<dbReference type="InterPro" id="IPR015421">
    <property type="entry name" value="PyrdxlP-dep_Trfase_major"/>
</dbReference>
<dbReference type="InterPro" id="IPR015422">
    <property type="entry name" value="PyrdxlP-dep_Trfase_small"/>
</dbReference>
<dbReference type="InterPro" id="IPR001085">
    <property type="entry name" value="Ser_HO-MeTrfase"/>
</dbReference>
<dbReference type="InterPro" id="IPR049943">
    <property type="entry name" value="Ser_HO-MeTrfase-like"/>
</dbReference>
<dbReference type="InterPro" id="IPR019798">
    <property type="entry name" value="Ser_HO-MeTrfase_PLP_BS"/>
</dbReference>
<dbReference type="InterPro" id="IPR039429">
    <property type="entry name" value="SHMT-like_dom"/>
</dbReference>
<dbReference type="NCBIfam" id="NF000586">
    <property type="entry name" value="PRK00011.1"/>
    <property type="match status" value="1"/>
</dbReference>
<dbReference type="PANTHER" id="PTHR11680">
    <property type="entry name" value="SERINE HYDROXYMETHYLTRANSFERASE"/>
    <property type="match status" value="1"/>
</dbReference>
<dbReference type="PANTHER" id="PTHR11680:SF50">
    <property type="entry name" value="SERINE HYDROXYMETHYLTRANSFERASE"/>
    <property type="match status" value="1"/>
</dbReference>
<dbReference type="Pfam" id="PF00464">
    <property type="entry name" value="SHMT"/>
    <property type="match status" value="1"/>
</dbReference>
<dbReference type="PIRSF" id="PIRSF000412">
    <property type="entry name" value="SHMT"/>
    <property type="match status" value="1"/>
</dbReference>
<dbReference type="SUPFAM" id="SSF53383">
    <property type="entry name" value="PLP-dependent transferases"/>
    <property type="match status" value="1"/>
</dbReference>
<dbReference type="PROSITE" id="PS00096">
    <property type="entry name" value="SHMT"/>
    <property type="match status" value="1"/>
</dbReference>
<sequence>MFNRTTSTVANVDPELYAAIEQENRRQEDHIELIASENYTSPAVMAAQGSQLTNKYAEGYPGKRYYGGCEYVDVVEQLAIDRVKQLFGAEAANVQPNSGSQANQGVFFAMLKPGDTIMGMSLAHGGHLTHGSPVNMSGKWFNVVSYGLNENEDIDYEAAEQLAQEHKPKLIVAGASAFSLKIDFERLAKIAKSVGAYLMVDMAHYAGLIAAGVYPNPVPHADFVTTTTHKSLRGPRGGVILMKAEYEKPINSAIFPGIQGGPLMHVIAGKAVAFKEALSPEFKAYQEKVVENARVLAETLVKRGLRIVSGRTESHVMLVDLRAKNITGKAAEAALGAAHITVNKNAIPNDPEKPFVTSGVRLGSPAMTTRGFGVKEAEIVGNLIADVLEAPEDAATLERVRGQVAELTKRFPVYG</sequence>
<feature type="chain" id="PRO_0000234958" description="Serine hydroxymethyltransferase 2">
    <location>
        <begin position="1"/>
        <end position="415"/>
    </location>
</feature>
<feature type="binding site" evidence="1">
    <location>
        <position position="122"/>
    </location>
    <ligand>
        <name>(6S)-5,6,7,8-tetrahydrofolate</name>
        <dbReference type="ChEBI" id="CHEBI:57453"/>
    </ligand>
</feature>
<feature type="binding site" evidence="1">
    <location>
        <begin position="126"/>
        <end position="128"/>
    </location>
    <ligand>
        <name>(6S)-5,6,7,8-tetrahydrofolate</name>
        <dbReference type="ChEBI" id="CHEBI:57453"/>
    </ligand>
</feature>
<feature type="site" description="Plays an important role in substrate specificity" evidence="1">
    <location>
        <position position="229"/>
    </location>
</feature>
<feature type="modified residue" description="N6-(pyridoxal phosphate)lysine" evidence="1">
    <location>
        <position position="230"/>
    </location>
</feature>
<protein>
    <recommendedName>
        <fullName evidence="1">Serine hydroxymethyltransferase 2</fullName>
        <shortName evidence="1">SHMT 2</shortName>
        <shortName evidence="1">Serine methylase 2</shortName>
        <ecNumber evidence="1">2.1.2.1</ecNumber>
    </recommendedName>
</protein>